<gene>
    <name evidence="1" type="primary">dcd</name>
    <name type="ordered locus">RAF_ORF0095</name>
</gene>
<organism>
    <name type="scientific">Rickettsia africae (strain ESF-5)</name>
    <dbReference type="NCBI Taxonomy" id="347255"/>
    <lineage>
        <taxon>Bacteria</taxon>
        <taxon>Pseudomonadati</taxon>
        <taxon>Pseudomonadota</taxon>
        <taxon>Alphaproteobacteria</taxon>
        <taxon>Rickettsiales</taxon>
        <taxon>Rickettsiaceae</taxon>
        <taxon>Rickettsieae</taxon>
        <taxon>Rickettsia</taxon>
        <taxon>spotted fever group</taxon>
    </lineage>
</organism>
<accession>C3PMB0</accession>
<protein>
    <recommendedName>
        <fullName evidence="1">dCTP deaminase</fullName>
        <ecNumber evidence="1">3.5.4.13</ecNumber>
    </recommendedName>
    <alternativeName>
        <fullName evidence="1">Deoxycytidine triphosphate deaminase</fullName>
    </alternativeName>
</protein>
<evidence type="ECO:0000255" key="1">
    <source>
        <dbReference type="HAMAP-Rule" id="MF_00146"/>
    </source>
</evidence>
<reference key="1">
    <citation type="journal article" date="2009" name="BMC Genomics">
        <title>Analysis of the Rickettsia africae genome reveals that virulence acquisition in Rickettsia species may be explained by genome reduction.</title>
        <authorList>
            <person name="Fournier P.-E."/>
            <person name="El Karkouri K."/>
            <person name="Leroy Q."/>
            <person name="Robert C."/>
            <person name="Giumelli B."/>
            <person name="Renesto P."/>
            <person name="Socolovschi C."/>
            <person name="Parola P."/>
            <person name="Audic S."/>
            <person name="Raoult D."/>
        </authorList>
    </citation>
    <scope>NUCLEOTIDE SEQUENCE [LARGE SCALE GENOMIC DNA]</scope>
    <source>
        <strain>ESF-5</strain>
    </source>
</reference>
<feature type="chain" id="PRO_1000203365" description="dCTP deaminase">
    <location>
        <begin position="1"/>
        <end position="188"/>
    </location>
</feature>
<feature type="active site" description="Proton donor/acceptor" evidence="1">
    <location>
        <position position="137"/>
    </location>
</feature>
<feature type="binding site" evidence="1">
    <location>
        <begin position="111"/>
        <end position="116"/>
    </location>
    <ligand>
        <name>dCTP</name>
        <dbReference type="ChEBI" id="CHEBI:61481"/>
    </ligand>
</feature>
<feature type="binding site" evidence="1">
    <location>
        <begin position="135"/>
        <end position="137"/>
    </location>
    <ligand>
        <name>dCTP</name>
        <dbReference type="ChEBI" id="CHEBI:61481"/>
    </ligand>
</feature>
<feature type="binding site" evidence="1">
    <location>
        <position position="156"/>
    </location>
    <ligand>
        <name>dCTP</name>
        <dbReference type="ChEBI" id="CHEBI:61481"/>
    </ligand>
</feature>
<feature type="binding site" evidence="1">
    <location>
        <position position="170"/>
    </location>
    <ligand>
        <name>dCTP</name>
        <dbReference type="ChEBI" id="CHEBI:61481"/>
    </ligand>
</feature>
<feature type="binding site" evidence="1">
    <location>
        <position position="179"/>
    </location>
    <ligand>
        <name>dCTP</name>
        <dbReference type="ChEBI" id="CHEBI:61481"/>
    </ligand>
</feature>
<feature type="binding site" evidence="1">
    <location>
        <position position="180"/>
    </location>
    <ligand>
        <name>dCTP</name>
        <dbReference type="ChEBI" id="CHEBI:61481"/>
    </ligand>
</feature>
<keyword id="KW-0378">Hydrolase</keyword>
<keyword id="KW-0546">Nucleotide metabolism</keyword>
<keyword id="KW-0547">Nucleotide-binding</keyword>
<proteinExistence type="inferred from homology"/>
<sequence>MAIMSDKWIKEAVINHSMIRPFAEKQVRVHNKEKIISYGLSSYGYDARVSNEFKIFTNINSTTVDPKNFSEYNLVDREVDVCIIPPNSFALGRTIEYFKIPRDVLVICVGKSTYARCGIIVNVTPLEPEWEGHVTLEFSNTTPLPAKIYANEGACQFLFLKSDQICDTSYADRQGKYMKQVGVTLPLT</sequence>
<comment type="function">
    <text evidence="1">Catalyzes the deamination of dCTP to dUTP.</text>
</comment>
<comment type="catalytic activity">
    <reaction evidence="1">
        <text>dCTP + H2O + H(+) = dUTP + NH4(+)</text>
        <dbReference type="Rhea" id="RHEA:22680"/>
        <dbReference type="ChEBI" id="CHEBI:15377"/>
        <dbReference type="ChEBI" id="CHEBI:15378"/>
        <dbReference type="ChEBI" id="CHEBI:28938"/>
        <dbReference type="ChEBI" id="CHEBI:61481"/>
        <dbReference type="ChEBI" id="CHEBI:61555"/>
        <dbReference type="EC" id="3.5.4.13"/>
    </reaction>
</comment>
<comment type="pathway">
    <text evidence="1">Pyrimidine metabolism; dUMP biosynthesis; dUMP from dCTP (dUTP route): step 1/2.</text>
</comment>
<comment type="subunit">
    <text evidence="1">Homotrimer.</text>
</comment>
<comment type="similarity">
    <text evidence="1">Belongs to the dCTP deaminase family.</text>
</comment>
<name>DCD_RICAE</name>
<dbReference type="EC" id="3.5.4.13" evidence="1"/>
<dbReference type="EMBL" id="CP001612">
    <property type="protein sequence ID" value="ACP53070.1"/>
    <property type="molecule type" value="Genomic_DNA"/>
</dbReference>
<dbReference type="RefSeq" id="WP_004996797.1">
    <property type="nucleotide sequence ID" value="NC_012633.1"/>
</dbReference>
<dbReference type="SMR" id="C3PMB0"/>
<dbReference type="GeneID" id="95361829"/>
<dbReference type="KEGG" id="raf:RAF_ORF0095"/>
<dbReference type="HOGENOM" id="CLU_087476_4_0_5"/>
<dbReference type="UniPathway" id="UPA00610">
    <property type="reaction ID" value="UER00665"/>
</dbReference>
<dbReference type="Proteomes" id="UP000002305">
    <property type="component" value="Chromosome"/>
</dbReference>
<dbReference type="GO" id="GO:0008829">
    <property type="term" value="F:dCTP deaminase activity"/>
    <property type="evidence" value="ECO:0007669"/>
    <property type="project" value="UniProtKB-UniRule"/>
</dbReference>
<dbReference type="GO" id="GO:0000166">
    <property type="term" value="F:nucleotide binding"/>
    <property type="evidence" value="ECO:0007669"/>
    <property type="project" value="UniProtKB-KW"/>
</dbReference>
<dbReference type="GO" id="GO:0006226">
    <property type="term" value="P:dUMP biosynthetic process"/>
    <property type="evidence" value="ECO:0007669"/>
    <property type="project" value="UniProtKB-UniPathway"/>
</dbReference>
<dbReference type="GO" id="GO:0006229">
    <property type="term" value="P:dUTP biosynthetic process"/>
    <property type="evidence" value="ECO:0007669"/>
    <property type="project" value="UniProtKB-UniRule"/>
</dbReference>
<dbReference type="CDD" id="cd07557">
    <property type="entry name" value="trimeric_dUTPase"/>
    <property type="match status" value="1"/>
</dbReference>
<dbReference type="FunFam" id="2.70.40.10:FF:000001">
    <property type="entry name" value="dCTP deaminase"/>
    <property type="match status" value="1"/>
</dbReference>
<dbReference type="Gene3D" id="2.70.40.10">
    <property type="match status" value="1"/>
</dbReference>
<dbReference type="HAMAP" id="MF_00146">
    <property type="entry name" value="dCTP_deaminase"/>
    <property type="match status" value="1"/>
</dbReference>
<dbReference type="InterPro" id="IPR011962">
    <property type="entry name" value="dCTP_deaminase"/>
</dbReference>
<dbReference type="InterPro" id="IPR036157">
    <property type="entry name" value="dUTPase-like_sf"/>
</dbReference>
<dbReference type="InterPro" id="IPR033704">
    <property type="entry name" value="dUTPase_trimeric"/>
</dbReference>
<dbReference type="NCBIfam" id="TIGR02274">
    <property type="entry name" value="dCTP_deam"/>
    <property type="match status" value="1"/>
</dbReference>
<dbReference type="PANTHER" id="PTHR42680">
    <property type="entry name" value="DCTP DEAMINASE"/>
    <property type="match status" value="1"/>
</dbReference>
<dbReference type="PANTHER" id="PTHR42680:SF3">
    <property type="entry name" value="DCTP DEAMINASE"/>
    <property type="match status" value="1"/>
</dbReference>
<dbReference type="Pfam" id="PF22769">
    <property type="entry name" value="DCD"/>
    <property type="match status" value="1"/>
</dbReference>
<dbReference type="SUPFAM" id="SSF51283">
    <property type="entry name" value="dUTPase-like"/>
    <property type="match status" value="1"/>
</dbReference>